<sequence>MGSCVGKERSDEEDKIDFKGGNVHVISNKENWDHKIAEANKDGKIVIANFSAAWCGPCRVIAPVYAEMSQTYPQFMFLTIDVDELMDFSSSWDIRATPTFFFLKNGEQVDKLVGANKPELEKKVAALADSA</sequence>
<name>TRH41_ORYSJ</name>
<keyword id="KW-0963">Cytoplasm</keyword>
<keyword id="KW-1015">Disulfide bond</keyword>
<keyword id="KW-0249">Electron transport</keyword>
<keyword id="KW-0676">Redox-active center</keyword>
<keyword id="KW-1185">Reference proteome</keyword>
<keyword id="KW-0813">Transport</keyword>
<proteinExistence type="evidence at transcript level"/>
<feature type="chain" id="PRO_0000394828" description="Thioredoxin H4-1">
    <location>
        <begin position="1"/>
        <end position="131"/>
    </location>
</feature>
<feature type="domain" description="Thioredoxin" evidence="2">
    <location>
        <begin position="3"/>
        <end position="129"/>
    </location>
</feature>
<feature type="active site" description="Nucleophile" evidence="1">
    <location>
        <position position="55"/>
    </location>
</feature>
<feature type="active site" description="Nucleophile" evidence="1">
    <location>
        <position position="58"/>
    </location>
</feature>
<feature type="site" description="Contributes to redox potential value" evidence="1">
    <location>
        <position position="56"/>
    </location>
</feature>
<feature type="site" description="Contributes to redox potential value" evidence="1">
    <location>
        <position position="57"/>
    </location>
</feature>
<feature type="disulfide bond" description="Redox-active" evidence="2">
    <location>
        <begin position="55"/>
        <end position="58"/>
    </location>
</feature>
<reference key="1">
    <citation type="journal article" date="2002" name="Nature">
        <title>The genome sequence and structure of rice chromosome 1.</title>
        <authorList>
            <person name="Sasaki T."/>
            <person name="Matsumoto T."/>
            <person name="Yamamoto K."/>
            <person name="Sakata K."/>
            <person name="Baba T."/>
            <person name="Katayose Y."/>
            <person name="Wu J."/>
            <person name="Niimura Y."/>
            <person name="Cheng Z."/>
            <person name="Nagamura Y."/>
            <person name="Antonio B.A."/>
            <person name="Kanamori H."/>
            <person name="Hosokawa S."/>
            <person name="Masukawa M."/>
            <person name="Arikawa K."/>
            <person name="Chiden Y."/>
            <person name="Hayashi M."/>
            <person name="Okamoto M."/>
            <person name="Ando T."/>
            <person name="Aoki H."/>
            <person name="Arita K."/>
            <person name="Hamada M."/>
            <person name="Harada C."/>
            <person name="Hijishita S."/>
            <person name="Honda M."/>
            <person name="Ichikawa Y."/>
            <person name="Idonuma A."/>
            <person name="Iijima M."/>
            <person name="Ikeda M."/>
            <person name="Ikeno M."/>
            <person name="Ito S."/>
            <person name="Ito T."/>
            <person name="Ito Y."/>
            <person name="Ito Y."/>
            <person name="Iwabuchi A."/>
            <person name="Kamiya K."/>
            <person name="Karasawa W."/>
            <person name="Katagiri S."/>
            <person name="Kikuta A."/>
            <person name="Kobayashi N."/>
            <person name="Kono I."/>
            <person name="Machita K."/>
            <person name="Maehara T."/>
            <person name="Mizuno H."/>
            <person name="Mizubayashi T."/>
            <person name="Mukai Y."/>
            <person name="Nagasaki H."/>
            <person name="Nakashima M."/>
            <person name="Nakama Y."/>
            <person name="Nakamichi Y."/>
            <person name="Nakamura M."/>
            <person name="Namiki N."/>
            <person name="Negishi M."/>
            <person name="Ohta I."/>
            <person name="Ono N."/>
            <person name="Saji S."/>
            <person name="Sakai K."/>
            <person name="Shibata M."/>
            <person name="Shimokawa T."/>
            <person name="Shomura A."/>
            <person name="Song J."/>
            <person name="Takazaki Y."/>
            <person name="Terasawa K."/>
            <person name="Tsuji K."/>
            <person name="Waki K."/>
            <person name="Yamagata H."/>
            <person name="Yamane H."/>
            <person name="Yoshiki S."/>
            <person name="Yoshihara R."/>
            <person name="Yukawa K."/>
            <person name="Zhong H."/>
            <person name="Iwama H."/>
            <person name="Endo T."/>
            <person name="Ito H."/>
            <person name="Hahn J.H."/>
            <person name="Kim H.-I."/>
            <person name="Eun M.-Y."/>
            <person name="Yano M."/>
            <person name="Jiang J."/>
            <person name="Gojobori T."/>
        </authorList>
    </citation>
    <scope>NUCLEOTIDE SEQUENCE [LARGE SCALE GENOMIC DNA]</scope>
    <source>
        <strain>cv. Nipponbare</strain>
    </source>
</reference>
<reference key="2">
    <citation type="journal article" date="2005" name="Nature">
        <title>The map-based sequence of the rice genome.</title>
        <authorList>
            <consortium name="International rice genome sequencing project (IRGSP)"/>
        </authorList>
    </citation>
    <scope>NUCLEOTIDE SEQUENCE [LARGE SCALE GENOMIC DNA]</scope>
    <source>
        <strain>cv. Nipponbare</strain>
    </source>
</reference>
<reference key="3">
    <citation type="journal article" date="2008" name="Nucleic Acids Res.">
        <title>The rice annotation project database (RAP-DB): 2008 update.</title>
        <authorList>
            <consortium name="The rice annotation project (RAP)"/>
        </authorList>
    </citation>
    <scope>GENOME REANNOTATION</scope>
    <source>
        <strain>cv. Nipponbare</strain>
    </source>
</reference>
<reference key="4">
    <citation type="journal article" date="2013" name="Rice">
        <title>Improvement of the Oryza sativa Nipponbare reference genome using next generation sequence and optical map data.</title>
        <authorList>
            <person name="Kawahara Y."/>
            <person name="de la Bastide M."/>
            <person name="Hamilton J.P."/>
            <person name="Kanamori H."/>
            <person name="McCombie W.R."/>
            <person name="Ouyang S."/>
            <person name="Schwartz D.C."/>
            <person name="Tanaka T."/>
            <person name="Wu J."/>
            <person name="Zhou S."/>
            <person name="Childs K.L."/>
            <person name="Davidson R.M."/>
            <person name="Lin H."/>
            <person name="Quesada-Ocampo L."/>
            <person name="Vaillancourt B."/>
            <person name="Sakai H."/>
            <person name="Lee S.S."/>
            <person name="Kim J."/>
            <person name="Numa H."/>
            <person name="Itoh T."/>
            <person name="Buell C.R."/>
            <person name="Matsumoto T."/>
        </authorList>
    </citation>
    <scope>GENOME REANNOTATION</scope>
    <source>
        <strain>cv. Nipponbare</strain>
    </source>
</reference>
<reference key="5">
    <citation type="journal article" date="2005" name="PLoS Biol.">
        <title>The genomes of Oryza sativa: a history of duplications.</title>
        <authorList>
            <person name="Yu J."/>
            <person name="Wang J."/>
            <person name="Lin W."/>
            <person name="Li S."/>
            <person name="Li H."/>
            <person name="Zhou J."/>
            <person name="Ni P."/>
            <person name="Dong W."/>
            <person name="Hu S."/>
            <person name="Zeng C."/>
            <person name="Zhang J."/>
            <person name="Zhang Y."/>
            <person name="Li R."/>
            <person name="Xu Z."/>
            <person name="Li S."/>
            <person name="Li X."/>
            <person name="Zheng H."/>
            <person name="Cong L."/>
            <person name="Lin L."/>
            <person name="Yin J."/>
            <person name="Geng J."/>
            <person name="Li G."/>
            <person name="Shi J."/>
            <person name="Liu J."/>
            <person name="Lv H."/>
            <person name="Li J."/>
            <person name="Wang J."/>
            <person name="Deng Y."/>
            <person name="Ran L."/>
            <person name="Shi X."/>
            <person name="Wang X."/>
            <person name="Wu Q."/>
            <person name="Li C."/>
            <person name="Ren X."/>
            <person name="Wang J."/>
            <person name="Wang X."/>
            <person name="Li D."/>
            <person name="Liu D."/>
            <person name="Zhang X."/>
            <person name="Ji Z."/>
            <person name="Zhao W."/>
            <person name="Sun Y."/>
            <person name="Zhang Z."/>
            <person name="Bao J."/>
            <person name="Han Y."/>
            <person name="Dong L."/>
            <person name="Ji J."/>
            <person name="Chen P."/>
            <person name="Wu S."/>
            <person name="Liu J."/>
            <person name="Xiao Y."/>
            <person name="Bu D."/>
            <person name="Tan J."/>
            <person name="Yang L."/>
            <person name="Ye C."/>
            <person name="Zhang J."/>
            <person name="Xu J."/>
            <person name="Zhou Y."/>
            <person name="Yu Y."/>
            <person name="Zhang B."/>
            <person name="Zhuang S."/>
            <person name="Wei H."/>
            <person name="Liu B."/>
            <person name="Lei M."/>
            <person name="Yu H."/>
            <person name="Li Y."/>
            <person name="Xu H."/>
            <person name="Wei S."/>
            <person name="He X."/>
            <person name="Fang L."/>
            <person name="Zhang Z."/>
            <person name="Zhang Y."/>
            <person name="Huang X."/>
            <person name="Su Z."/>
            <person name="Tong W."/>
            <person name="Li J."/>
            <person name="Tong Z."/>
            <person name="Li S."/>
            <person name="Ye J."/>
            <person name="Wang L."/>
            <person name="Fang L."/>
            <person name="Lei T."/>
            <person name="Chen C.-S."/>
            <person name="Chen H.-C."/>
            <person name="Xu Z."/>
            <person name="Li H."/>
            <person name="Huang H."/>
            <person name="Zhang F."/>
            <person name="Xu H."/>
            <person name="Li N."/>
            <person name="Zhao C."/>
            <person name="Li S."/>
            <person name="Dong L."/>
            <person name="Huang Y."/>
            <person name="Li L."/>
            <person name="Xi Y."/>
            <person name="Qi Q."/>
            <person name="Li W."/>
            <person name="Zhang B."/>
            <person name="Hu W."/>
            <person name="Zhang Y."/>
            <person name="Tian X."/>
            <person name="Jiao Y."/>
            <person name="Liang X."/>
            <person name="Jin J."/>
            <person name="Gao L."/>
            <person name="Zheng W."/>
            <person name="Hao B."/>
            <person name="Liu S.-M."/>
            <person name="Wang W."/>
            <person name="Yuan L."/>
            <person name="Cao M."/>
            <person name="McDermott J."/>
            <person name="Samudrala R."/>
            <person name="Wang J."/>
            <person name="Wong G.K.-S."/>
            <person name="Yang H."/>
        </authorList>
    </citation>
    <scope>NUCLEOTIDE SEQUENCE [LARGE SCALE GENOMIC DNA]</scope>
    <source>
        <strain>cv. Nipponbare</strain>
    </source>
</reference>
<reference key="6">
    <citation type="journal article" date="2003" name="Science">
        <title>Collection, mapping, and annotation of over 28,000 cDNA clones from japonica rice.</title>
        <authorList>
            <consortium name="The rice full-length cDNA consortium"/>
        </authorList>
    </citation>
    <scope>NUCLEOTIDE SEQUENCE [LARGE SCALE MRNA]</scope>
    <source>
        <strain>cv. Nipponbare</strain>
    </source>
</reference>
<reference key="7">
    <citation type="journal article" date="2009" name="Mol. Plant">
        <title>Comparative genomic study of the thioredoxin family in photosynthetic organisms with emphasis on Populus trichocarpa.</title>
        <authorList>
            <person name="Chibani K."/>
            <person name="Wingsle G."/>
            <person name="Jacquot J.P."/>
            <person name="Gelhaye E."/>
            <person name="Rouhier N."/>
        </authorList>
    </citation>
    <scope>GENE FAMILY</scope>
    <scope>NOMENCLATURE</scope>
</reference>
<gene>
    <name type="ordered locus">Os01g0168200</name>
    <name type="ordered locus">LOC_Os01g07376</name>
    <name type="ORF">OJ1276_B06.16</name>
    <name type="ORF">OsJ_00524</name>
    <name type="ORF">P0028E10.17</name>
    <name type="ORF">P0701D05.44</name>
</gene>
<accession>Q9AS75</accession>
<accession>A0A0P0UZE3</accession>
<organism>
    <name type="scientific">Oryza sativa subsp. japonica</name>
    <name type="common">Rice</name>
    <dbReference type="NCBI Taxonomy" id="39947"/>
    <lineage>
        <taxon>Eukaryota</taxon>
        <taxon>Viridiplantae</taxon>
        <taxon>Streptophyta</taxon>
        <taxon>Embryophyta</taxon>
        <taxon>Tracheophyta</taxon>
        <taxon>Spermatophyta</taxon>
        <taxon>Magnoliopsida</taxon>
        <taxon>Liliopsida</taxon>
        <taxon>Poales</taxon>
        <taxon>Poaceae</taxon>
        <taxon>BOP clade</taxon>
        <taxon>Oryzoideae</taxon>
        <taxon>Oryzeae</taxon>
        <taxon>Oryzinae</taxon>
        <taxon>Oryza</taxon>
        <taxon>Oryza sativa</taxon>
    </lineage>
</organism>
<evidence type="ECO:0000250" key="1"/>
<evidence type="ECO:0000255" key="2">
    <source>
        <dbReference type="PROSITE-ProRule" id="PRU00691"/>
    </source>
</evidence>
<evidence type="ECO:0000305" key="3"/>
<dbReference type="EMBL" id="AP002912">
    <property type="protein sequence ID" value="BAB39913.1"/>
    <property type="molecule type" value="Genomic_DNA"/>
</dbReference>
<dbReference type="EMBL" id="AP003301">
    <property type="protein sequence ID" value="BAB64819.1"/>
    <property type="molecule type" value="Genomic_DNA"/>
</dbReference>
<dbReference type="EMBL" id="AP003339">
    <property type="protein sequence ID" value="BAB92503.1"/>
    <property type="molecule type" value="Genomic_DNA"/>
</dbReference>
<dbReference type="EMBL" id="AP008207">
    <property type="protein sequence ID" value="BAF04041.1"/>
    <property type="molecule type" value="Genomic_DNA"/>
</dbReference>
<dbReference type="EMBL" id="AP014957">
    <property type="protein sequence ID" value="BAS70590.1"/>
    <property type="molecule type" value="Genomic_DNA"/>
</dbReference>
<dbReference type="EMBL" id="CM000138">
    <property type="protein sequence ID" value="EEE53937.1"/>
    <property type="molecule type" value="Genomic_DNA"/>
</dbReference>
<dbReference type="EMBL" id="AK103756">
    <property type="protein sequence ID" value="BAG96244.1"/>
    <property type="molecule type" value="mRNA"/>
</dbReference>
<dbReference type="RefSeq" id="XP_015625017.1">
    <property type="nucleotide sequence ID" value="XM_015769531.1"/>
</dbReference>
<dbReference type="SMR" id="Q9AS75"/>
<dbReference type="FunCoup" id="Q9AS75">
    <property type="interactions" value="1791"/>
</dbReference>
<dbReference type="STRING" id="39947.Q9AS75"/>
<dbReference type="PaxDb" id="39947-Q9AS75"/>
<dbReference type="EnsemblPlants" id="Os01t0168200-01">
    <property type="protein sequence ID" value="Os01t0168200-01"/>
    <property type="gene ID" value="Os01g0168200"/>
</dbReference>
<dbReference type="Gramene" id="Os01t0168200-01">
    <property type="protein sequence ID" value="Os01t0168200-01"/>
    <property type="gene ID" value="Os01g0168200"/>
</dbReference>
<dbReference type="KEGG" id="dosa:Os01g0168200"/>
<dbReference type="eggNOG" id="KOG0907">
    <property type="taxonomic scope" value="Eukaryota"/>
</dbReference>
<dbReference type="HOGENOM" id="CLU_090389_14_1_1"/>
<dbReference type="InParanoid" id="Q9AS75"/>
<dbReference type="OMA" id="CIMIAPA"/>
<dbReference type="OrthoDB" id="2121326at2759"/>
<dbReference type="Proteomes" id="UP000000763">
    <property type="component" value="Chromosome 1"/>
</dbReference>
<dbReference type="Proteomes" id="UP000007752">
    <property type="component" value="Chromosome 1"/>
</dbReference>
<dbReference type="Proteomes" id="UP000059680">
    <property type="component" value="Chromosome 1"/>
</dbReference>
<dbReference type="GO" id="GO:0005737">
    <property type="term" value="C:cytoplasm"/>
    <property type="evidence" value="ECO:0007669"/>
    <property type="project" value="UniProtKB-SubCell"/>
</dbReference>
<dbReference type="CDD" id="cd02947">
    <property type="entry name" value="TRX_family"/>
    <property type="match status" value="1"/>
</dbReference>
<dbReference type="FunFam" id="3.40.30.10:FF:000245">
    <property type="entry name" value="Thioredoxin"/>
    <property type="match status" value="1"/>
</dbReference>
<dbReference type="Gene3D" id="3.40.30.10">
    <property type="entry name" value="Glutaredoxin"/>
    <property type="match status" value="1"/>
</dbReference>
<dbReference type="InterPro" id="IPR036249">
    <property type="entry name" value="Thioredoxin-like_sf"/>
</dbReference>
<dbReference type="InterPro" id="IPR017937">
    <property type="entry name" value="Thioredoxin_CS"/>
</dbReference>
<dbReference type="InterPro" id="IPR013766">
    <property type="entry name" value="Thioredoxin_domain"/>
</dbReference>
<dbReference type="InterPro" id="IPR050620">
    <property type="entry name" value="Thioredoxin_H-type-like"/>
</dbReference>
<dbReference type="PANTHER" id="PTHR10438">
    <property type="entry name" value="THIOREDOXIN"/>
    <property type="match status" value="1"/>
</dbReference>
<dbReference type="PANTHER" id="PTHR10438:SF434">
    <property type="entry name" value="THIOREDOXIN H9"/>
    <property type="match status" value="1"/>
</dbReference>
<dbReference type="Pfam" id="PF00085">
    <property type="entry name" value="Thioredoxin"/>
    <property type="match status" value="1"/>
</dbReference>
<dbReference type="PRINTS" id="PR00421">
    <property type="entry name" value="THIOREDOXIN"/>
</dbReference>
<dbReference type="SUPFAM" id="SSF52833">
    <property type="entry name" value="Thioredoxin-like"/>
    <property type="match status" value="1"/>
</dbReference>
<dbReference type="PROSITE" id="PS00194">
    <property type="entry name" value="THIOREDOXIN_1"/>
    <property type="match status" value="1"/>
</dbReference>
<dbReference type="PROSITE" id="PS51352">
    <property type="entry name" value="THIOREDOXIN_2"/>
    <property type="match status" value="1"/>
</dbReference>
<protein>
    <recommendedName>
        <fullName>Thioredoxin H4-1</fullName>
        <shortName>OsTrxh4-1</shortName>
    </recommendedName>
    <alternativeName>
        <fullName>OsTrx01</fullName>
    </alternativeName>
</protein>
<comment type="function">
    <text>Probable thiol-disulfide oxidoreductase that may be involved in the redox regulation of a number of cytosolic enzymes.</text>
</comment>
<comment type="subcellular location">
    <subcellularLocation>
        <location evidence="1">Cytoplasm</location>
    </subcellularLocation>
</comment>
<comment type="similarity">
    <text evidence="3">Belongs to the thioredoxin family. Plant H-type subfamily.</text>
</comment>